<sequence>MFLLSRFSDIISIHPSNFWKPTKEALAEEIHKKYANKVIQNIGLAICVYDFLKIGEGIIKYGDGSSYMNVVFRLIIFRPFRGEVMLGKIKSCSEEGIRVTISFFDDIFIPKDMLFDPCVFRPDERAWVWKIEGEDGSEGTELYFDIDEEIRFQIESEDFVDISPKRNKNATAITGTEALESVSPYTLIASCSRDGLGIPAWWK</sequence>
<reference key="1">
    <citation type="journal article" date="2006" name="Nucleic Acids Res.">
        <title>Ancient origin, functional conservation and fast evolution of DNA-dependent RNA polymerase III.</title>
        <authorList>
            <person name="Proshkina G.M."/>
            <person name="Shematorova E.K."/>
            <person name="Proshkin S.A."/>
            <person name="Zaros C."/>
            <person name="Thuriaux P."/>
            <person name="Shpakovski G.V."/>
        </authorList>
    </citation>
    <scope>NUCLEOTIDE SEQUENCE [MRNA]</scope>
    <scope>FUNCTION</scope>
    <scope>IDENTIFICATION IN THE RNA POLYMERASE III COMPLEX</scope>
    <source>
        <strain>972 / ATCC 24843</strain>
    </source>
</reference>
<reference key="2">
    <citation type="journal article" date="2002" name="Nature">
        <title>The genome sequence of Schizosaccharomyces pombe.</title>
        <authorList>
            <person name="Wood V."/>
            <person name="Gwilliam R."/>
            <person name="Rajandream M.A."/>
            <person name="Lyne M.H."/>
            <person name="Lyne R."/>
            <person name="Stewart A."/>
            <person name="Sgouros J.G."/>
            <person name="Peat N."/>
            <person name="Hayles J."/>
            <person name="Baker S.G."/>
            <person name="Basham D."/>
            <person name="Bowman S."/>
            <person name="Brooks K."/>
            <person name="Brown D."/>
            <person name="Brown S."/>
            <person name="Chillingworth T."/>
            <person name="Churcher C.M."/>
            <person name="Collins M."/>
            <person name="Connor R."/>
            <person name="Cronin A."/>
            <person name="Davis P."/>
            <person name="Feltwell T."/>
            <person name="Fraser A."/>
            <person name="Gentles S."/>
            <person name="Goble A."/>
            <person name="Hamlin N."/>
            <person name="Harris D.E."/>
            <person name="Hidalgo J."/>
            <person name="Hodgson G."/>
            <person name="Holroyd S."/>
            <person name="Hornsby T."/>
            <person name="Howarth S."/>
            <person name="Huckle E.J."/>
            <person name="Hunt S."/>
            <person name="Jagels K."/>
            <person name="James K.D."/>
            <person name="Jones L."/>
            <person name="Jones M."/>
            <person name="Leather S."/>
            <person name="McDonald S."/>
            <person name="McLean J."/>
            <person name="Mooney P."/>
            <person name="Moule S."/>
            <person name="Mungall K.L."/>
            <person name="Murphy L.D."/>
            <person name="Niblett D."/>
            <person name="Odell C."/>
            <person name="Oliver K."/>
            <person name="O'Neil S."/>
            <person name="Pearson D."/>
            <person name="Quail M.A."/>
            <person name="Rabbinowitsch E."/>
            <person name="Rutherford K.M."/>
            <person name="Rutter S."/>
            <person name="Saunders D."/>
            <person name="Seeger K."/>
            <person name="Sharp S."/>
            <person name="Skelton J."/>
            <person name="Simmonds M.N."/>
            <person name="Squares R."/>
            <person name="Squares S."/>
            <person name="Stevens K."/>
            <person name="Taylor K."/>
            <person name="Taylor R.G."/>
            <person name="Tivey A."/>
            <person name="Walsh S.V."/>
            <person name="Warren T."/>
            <person name="Whitehead S."/>
            <person name="Woodward J.R."/>
            <person name="Volckaert G."/>
            <person name="Aert R."/>
            <person name="Robben J."/>
            <person name="Grymonprez B."/>
            <person name="Weltjens I."/>
            <person name="Vanstreels E."/>
            <person name="Rieger M."/>
            <person name="Schaefer M."/>
            <person name="Mueller-Auer S."/>
            <person name="Gabel C."/>
            <person name="Fuchs M."/>
            <person name="Duesterhoeft A."/>
            <person name="Fritzc C."/>
            <person name="Holzer E."/>
            <person name="Moestl D."/>
            <person name="Hilbert H."/>
            <person name="Borzym K."/>
            <person name="Langer I."/>
            <person name="Beck A."/>
            <person name="Lehrach H."/>
            <person name="Reinhardt R."/>
            <person name="Pohl T.M."/>
            <person name="Eger P."/>
            <person name="Zimmermann W."/>
            <person name="Wedler H."/>
            <person name="Wambutt R."/>
            <person name="Purnelle B."/>
            <person name="Goffeau A."/>
            <person name="Cadieu E."/>
            <person name="Dreano S."/>
            <person name="Gloux S."/>
            <person name="Lelaure V."/>
            <person name="Mottier S."/>
            <person name="Galibert F."/>
            <person name="Aves S.J."/>
            <person name="Xiang Z."/>
            <person name="Hunt C."/>
            <person name="Moore K."/>
            <person name="Hurst S.M."/>
            <person name="Lucas M."/>
            <person name="Rochet M."/>
            <person name="Gaillardin C."/>
            <person name="Tallada V.A."/>
            <person name="Garzon A."/>
            <person name="Thode G."/>
            <person name="Daga R.R."/>
            <person name="Cruzado L."/>
            <person name="Jimenez J."/>
            <person name="Sanchez M."/>
            <person name="del Rey F."/>
            <person name="Benito J."/>
            <person name="Dominguez A."/>
            <person name="Revuelta J.L."/>
            <person name="Moreno S."/>
            <person name="Armstrong J."/>
            <person name="Forsburg S.L."/>
            <person name="Cerutti L."/>
            <person name="Lowe T."/>
            <person name="McCombie W.R."/>
            <person name="Paulsen I."/>
            <person name="Potashkin J."/>
            <person name="Shpakovski G.V."/>
            <person name="Ussery D."/>
            <person name="Barrell B.G."/>
            <person name="Nurse P."/>
        </authorList>
    </citation>
    <scope>NUCLEOTIDE SEQUENCE [LARGE SCALE GENOMIC DNA]</scope>
    <source>
        <strain>972 / ATCC 24843</strain>
    </source>
</reference>
<reference key="3">
    <citation type="journal article" date="2005" name="Mol. Microbiol.">
        <title>Rpc25, a conserved RNA polymerase III subunit, is critical for transcription initiation.</title>
        <authorList>
            <person name="Zaros C."/>
            <person name="Thuriaux P."/>
        </authorList>
    </citation>
    <scope>FUNCTION</scope>
</reference>
<reference key="4">
    <citation type="journal article" date="2006" name="Nat. Biotechnol.">
        <title>ORFeome cloning and global analysis of protein localization in the fission yeast Schizosaccharomyces pombe.</title>
        <authorList>
            <person name="Matsuyama A."/>
            <person name="Arai R."/>
            <person name="Yashiroda Y."/>
            <person name="Shirai A."/>
            <person name="Kamata A."/>
            <person name="Sekido S."/>
            <person name="Kobayashi Y."/>
            <person name="Hashimoto A."/>
            <person name="Hamamoto M."/>
            <person name="Hiraoka Y."/>
            <person name="Horinouchi S."/>
            <person name="Yoshida M."/>
        </authorList>
    </citation>
    <scope>SUBCELLULAR LOCATION [LARGE SCALE ANALYSIS]</scope>
</reference>
<protein>
    <recommendedName>
        <fullName>DNA-directed RNA polymerase III subunit rpc8</fullName>
        <shortName>RNA polymerase III subunit C8</shortName>
    </recommendedName>
    <alternativeName>
        <fullName>RNA polymerase III subunit C25</fullName>
    </alternativeName>
</protein>
<gene>
    <name type="primary">rpc25</name>
    <name type="ORF">SPBC2G5.07c</name>
</gene>
<name>RPC8_SCHPO</name>
<keyword id="KW-0002">3D-structure</keyword>
<keyword id="KW-0963">Cytoplasm</keyword>
<keyword id="KW-0240">DNA-directed RNA polymerase</keyword>
<keyword id="KW-0539">Nucleus</keyword>
<keyword id="KW-1185">Reference proteome</keyword>
<keyword id="KW-0804">Transcription</keyword>
<proteinExistence type="evidence at protein level"/>
<evidence type="ECO:0000269" key="1">
    <source>
    </source>
</evidence>
<evidence type="ECO:0000269" key="2">
    <source>
    </source>
</evidence>
<evidence type="ECO:0000269" key="3">
    <source>
    </source>
</evidence>
<evidence type="ECO:0000305" key="4"/>
<evidence type="ECO:0007829" key="5">
    <source>
        <dbReference type="PDB" id="3AYH"/>
    </source>
</evidence>
<feature type="chain" id="PRO_0000362999" description="DNA-directed RNA polymerase III subunit rpc8">
    <location>
        <begin position="1"/>
        <end position="203"/>
    </location>
</feature>
<feature type="strand" evidence="5">
    <location>
        <begin position="2"/>
        <end position="13"/>
    </location>
</feature>
<feature type="helix" evidence="5">
    <location>
        <begin position="15"/>
        <end position="17"/>
    </location>
</feature>
<feature type="helix" evidence="5">
    <location>
        <begin position="22"/>
        <end position="34"/>
    </location>
</feature>
<feature type="strand" evidence="5">
    <location>
        <begin position="37"/>
        <end position="39"/>
    </location>
</feature>
<feature type="turn" evidence="5">
    <location>
        <begin position="40"/>
        <end position="42"/>
    </location>
</feature>
<feature type="strand" evidence="5">
    <location>
        <begin position="43"/>
        <end position="54"/>
    </location>
</feature>
<feature type="turn" evidence="5">
    <location>
        <begin position="61"/>
        <end position="63"/>
    </location>
</feature>
<feature type="strand" evidence="5">
    <location>
        <begin position="66"/>
        <end position="77"/>
    </location>
</feature>
<feature type="strand" evidence="5">
    <location>
        <begin position="84"/>
        <end position="93"/>
    </location>
</feature>
<feature type="strand" evidence="5">
    <location>
        <begin position="96"/>
        <end position="100"/>
    </location>
</feature>
<feature type="strand" evidence="5">
    <location>
        <begin position="107"/>
        <end position="110"/>
    </location>
</feature>
<feature type="helix" evidence="5">
    <location>
        <begin position="111"/>
        <end position="113"/>
    </location>
</feature>
<feature type="strand" evidence="5">
    <location>
        <begin position="118"/>
        <end position="121"/>
    </location>
</feature>
<feature type="helix" evidence="5">
    <location>
        <begin position="122"/>
        <end position="124"/>
    </location>
</feature>
<feature type="strand" evidence="5">
    <location>
        <begin position="126"/>
        <end position="131"/>
    </location>
</feature>
<feature type="strand" evidence="5">
    <location>
        <begin position="140"/>
        <end position="143"/>
    </location>
</feature>
<feature type="strand" evidence="5">
    <location>
        <begin position="149"/>
        <end position="159"/>
    </location>
</feature>
<feature type="strand" evidence="5">
    <location>
        <begin position="184"/>
        <end position="191"/>
    </location>
</feature>
<feature type="helix" evidence="5">
    <location>
        <begin position="199"/>
        <end position="202"/>
    </location>
</feature>
<organism>
    <name type="scientific">Schizosaccharomyces pombe (strain 972 / ATCC 24843)</name>
    <name type="common">Fission yeast</name>
    <dbReference type="NCBI Taxonomy" id="284812"/>
    <lineage>
        <taxon>Eukaryota</taxon>
        <taxon>Fungi</taxon>
        <taxon>Dikarya</taxon>
        <taxon>Ascomycota</taxon>
        <taxon>Taphrinomycotina</taxon>
        <taxon>Schizosaccharomycetes</taxon>
        <taxon>Schizosaccharomycetales</taxon>
        <taxon>Schizosaccharomycetaceae</taxon>
        <taxon>Schizosaccharomyces</taxon>
    </lineage>
</organism>
<comment type="function">
    <text evidence="1 3">DNA-dependent RNA polymerase catalyzes the transcription of DNA into RNA using the four ribonucleoside triphosphates as substrates. Specific peripheric component of RNA polymerase III which synthesizes small RNAs, such as 5S rRNA and tRNA.</text>
</comment>
<comment type="subunit">
    <text evidence="3">Component of the RNA polymerase III (Pol III) complex consisting of 17 subunits. Rpc25/rpc8 and rpc17/rpc9 form a Pol III subcomplex.</text>
</comment>
<comment type="subcellular location">
    <subcellularLocation>
        <location evidence="2">Cytoplasm</location>
    </subcellularLocation>
    <subcellularLocation>
        <location evidence="2">Nucleus</location>
    </subcellularLocation>
</comment>
<comment type="similarity">
    <text evidence="4">Belongs to the eukaryotic RPB7/RPC8 RNA polymerase subunit family.</text>
</comment>
<accession>O94285</accession>
<dbReference type="EMBL" id="DQ156221">
    <property type="protein sequence ID" value="ABA54849.1"/>
    <property type="molecule type" value="mRNA"/>
</dbReference>
<dbReference type="EMBL" id="CU329671">
    <property type="protein sequence ID" value="CAA21883.1"/>
    <property type="molecule type" value="Genomic_DNA"/>
</dbReference>
<dbReference type="PIR" id="T40164">
    <property type="entry name" value="T40164"/>
</dbReference>
<dbReference type="RefSeq" id="NP_596068.1">
    <property type="nucleotide sequence ID" value="NM_001021979.2"/>
</dbReference>
<dbReference type="PDB" id="3AYH">
    <property type="method" value="X-ray"/>
    <property type="resolution" value="2.19 A"/>
    <property type="chains" value="B=1-203"/>
</dbReference>
<dbReference type="PDBsum" id="3AYH"/>
<dbReference type="SMR" id="O94285"/>
<dbReference type="BioGRID" id="277038">
    <property type="interactions" value="6"/>
</dbReference>
<dbReference type="ComplexPortal" id="CPX-8905">
    <property type="entry name" value="DNA-directed RNA polymerase III complex"/>
</dbReference>
<dbReference type="FunCoup" id="O94285">
    <property type="interactions" value="469"/>
</dbReference>
<dbReference type="STRING" id="284812.O94285"/>
<dbReference type="PaxDb" id="4896-SPBC2G5.07c.1"/>
<dbReference type="EnsemblFungi" id="SPBC2G5.07c.1">
    <property type="protein sequence ID" value="SPBC2G5.07c.1:pep"/>
    <property type="gene ID" value="SPBC2G5.07c"/>
</dbReference>
<dbReference type="PomBase" id="SPBC2G5.07c">
    <property type="gene designation" value="rpc25"/>
</dbReference>
<dbReference type="VEuPathDB" id="FungiDB:SPBC2G5.07c"/>
<dbReference type="eggNOG" id="KOG3297">
    <property type="taxonomic scope" value="Eukaryota"/>
</dbReference>
<dbReference type="HOGENOM" id="CLU_073901_1_1_1"/>
<dbReference type="InParanoid" id="O94285"/>
<dbReference type="OMA" id="LGPTLWW"/>
<dbReference type="PhylomeDB" id="O94285"/>
<dbReference type="Reactome" id="R-SPO-76061">
    <property type="pathway name" value="RNA Polymerase III Transcription Initiation From Type 1 Promoter"/>
</dbReference>
<dbReference type="Reactome" id="R-SPO-76066">
    <property type="pathway name" value="RNA Polymerase III Transcription Initiation From Type 2 Promoter"/>
</dbReference>
<dbReference type="EvolutionaryTrace" id="O94285"/>
<dbReference type="PRO" id="PR:O94285"/>
<dbReference type="Proteomes" id="UP000002485">
    <property type="component" value="Chromosome II"/>
</dbReference>
<dbReference type="GO" id="GO:0000785">
    <property type="term" value="C:chromatin"/>
    <property type="evidence" value="ECO:0000314"/>
    <property type="project" value="PomBase"/>
</dbReference>
<dbReference type="GO" id="GO:0005829">
    <property type="term" value="C:cytosol"/>
    <property type="evidence" value="ECO:0007005"/>
    <property type="project" value="PomBase"/>
</dbReference>
<dbReference type="GO" id="GO:0005634">
    <property type="term" value="C:nucleus"/>
    <property type="evidence" value="ECO:0007005"/>
    <property type="project" value="PomBase"/>
</dbReference>
<dbReference type="GO" id="GO:0005666">
    <property type="term" value="C:RNA polymerase III complex"/>
    <property type="evidence" value="ECO:0000269"/>
    <property type="project" value="PomBase"/>
</dbReference>
<dbReference type="GO" id="GO:0003677">
    <property type="term" value="F:DNA binding"/>
    <property type="evidence" value="ECO:0007669"/>
    <property type="project" value="InterPro"/>
</dbReference>
<dbReference type="GO" id="GO:0003899">
    <property type="term" value="F:DNA-directed RNA polymerase activity"/>
    <property type="evidence" value="ECO:0007669"/>
    <property type="project" value="InterPro"/>
</dbReference>
<dbReference type="GO" id="GO:0006384">
    <property type="term" value="P:transcription initiation at RNA polymerase III promoter"/>
    <property type="evidence" value="ECO:0000318"/>
    <property type="project" value="GO_Central"/>
</dbReference>
<dbReference type="CDD" id="cd04330">
    <property type="entry name" value="RNAP_III_Rpc25_N"/>
    <property type="match status" value="1"/>
</dbReference>
<dbReference type="FunFam" id="3.30.1490.120:FF:000001">
    <property type="entry name" value="DNA-directed RNA polymerase II subunit RPB7"/>
    <property type="match status" value="1"/>
</dbReference>
<dbReference type="FunFam" id="2.40.50.140:FF:000221">
    <property type="entry name" value="DNA-directed RNA polymerase III subunit"/>
    <property type="match status" value="1"/>
</dbReference>
<dbReference type="Gene3D" id="2.40.50.140">
    <property type="entry name" value="Nucleic acid-binding proteins"/>
    <property type="match status" value="1"/>
</dbReference>
<dbReference type="Gene3D" id="3.30.1490.120">
    <property type="entry name" value="RNA polymerase Rpb7-like, N-terminal domain"/>
    <property type="match status" value="1"/>
</dbReference>
<dbReference type="InterPro" id="IPR012340">
    <property type="entry name" value="NA-bd_OB-fold"/>
</dbReference>
<dbReference type="InterPro" id="IPR013238">
    <property type="entry name" value="RNA_pol_III_Rbc25"/>
</dbReference>
<dbReference type="InterPro" id="IPR036898">
    <property type="entry name" value="RNA_pol_Rpb7-like_N_sf"/>
</dbReference>
<dbReference type="InterPro" id="IPR004519">
    <property type="entry name" value="RNAP_E/RPC8"/>
</dbReference>
<dbReference type="InterPro" id="IPR045113">
    <property type="entry name" value="Rpb7-like"/>
</dbReference>
<dbReference type="InterPro" id="IPR005576">
    <property type="entry name" value="Rpb7-like_N"/>
</dbReference>
<dbReference type="NCBIfam" id="TIGR00448">
    <property type="entry name" value="rpoE"/>
    <property type="match status" value="1"/>
</dbReference>
<dbReference type="PANTHER" id="PTHR12709">
    <property type="entry name" value="DNA-DIRECTED RNA POLYMERASE II, III"/>
    <property type="match status" value="1"/>
</dbReference>
<dbReference type="PANTHER" id="PTHR12709:SF1">
    <property type="entry name" value="DNA-DIRECTED RNA POLYMERASE III SUBUNIT RPC8"/>
    <property type="match status" value="1"/>
</dbReference>
<dbReference type="Pfam" id="PF08292">
    <property type="entry name" value="RNA_pol_Rbc25"/>
    <property type="match status" value="1"/>
</dbReference>
<dbReference type="Pfam" id="PF03876">
    <property type="entry name" value="SHS2_Rpb7-N"/>
    <property type="match status" value="1"/>
</dbReference>
<dbReference type="SUPFAM" id="SSF88798">
    <property type="entry name" value="N-terminal, heterodimerisation domain of RBP7 (RpoE)"/>
    <property type="match status" value="1"/>
</dbReference>
<dbReference type="SUPFAM" id="SSF50249">
    <property type="entry name" value="Nucleic acid-binding proteins"/>
    <property type="match status" value="1"/>
</dbReference>